<reference key="1">
    <citation type="submission" date="2004-07" db="EMBL/GenBank/DDBJ databases">
        <authorList>
            <consortium name="NIH - Xenopus Gene Collection (XGC) project"/>
        </authorList>
    </citation>
    <scope>NUCLEOTIDE SEQUENCE [LARGE SCALE MRNA]</scope>
    <source>
        <tissue>Embryo</tissue>
    </source>
</reference>
<dbReference type="EC" id="3.2.1.130" evidence="2"/>
<dbReference type="EMBL" id="BC077304">
    <property type="protein sequence ID" value="AAH77304.1"/>
    <property type="molecule type" value="mRNA"/>
</dbReference>
<dbReference type="RefSeq" id="NP_001086682.1">
    <property type="nucleotide sequence ID" value="NM_001093213.1"/>
</dbReference>
<dbReference type="SMR" id="Q6DE40"/>
<dbReference type="CAZy" id="GH99">
    <property type="family name" value="Glycoside Hydrolase Family 99"/>
</dbReference>
<dbReference type="DNASU" id="446517"/>
<dbReference type="GeneID" id="446517"/>
<dbReference type="KEGG" id="xla:446517"/>
<dbReference type="AGR" id="Xenbase:XB-GENE-985847"/>
<dbReference type="CTD" id="446517"/>
<dbReference type="Xenbase" id="XB-GENE-985847">
    <property type="gene designation" value="manea.L"/>
</dbReference>
<dbReference type="OrthoDB" id="406152at2759"/>
<dbReference type="Proteomes" id="UP000186698">
    <property type="component" value="Chromosome 5L"/>
</dbReference>
<dbReference type="Bgee" id="446517">
    <property type="expression patterns" value="Expressed in blastula and 19 other cell types or tissues"/>
</dbReference>
<dbReference type="GO" id="GO:0000139">
    <property type="term" value="C:Golgi membrane"/>
    <property type="evidence" value="ECO:0000318"/>
    <property type="project" value="GO_Central"/>
</dbReference>
<dbReference type="GO" id="GO:0004559">
    <property type="term" value="F:alpha-mannosidase activity"/>
    <property type="evidence" value="ECO:0000318"/>
    <property type="project" value="GO_Central"/>
</dbReference>
<dbReference type="GO" id="GO:0004569">
    <property type="term" value="F:glycoprotein endo-alpha-1,2-mannosidase activity"/>
    <property type="evidence" value="ECO:0007669"/>
    <property type="project" value="UniProtKB-EC"/>
</dbReference>
<dbReference type="CDD" id="cd11574">
    <property type="entry name" value="GH99"/>
    <property type="match status" value="1"/>
</dbReference>
<dbReference type="FunFam" id="3.20.20.80:FF:000019">
    <property type="entry name" value="glycoprotein endo-alpha-1,2-mannosidase"/>
    <property type="match status" value="1"/>
</dbReference>
<dbReference type="Gene3D" id="3.20.20.80">
    <property type="entry name" value="Glycosidases"/>
    <property type="match status" value="1"/>
</dbReference>
<dbReference type="InterPro" id="IPR026071">
    <property type="entry name" value="Glyco_Hydrolase_99"/>
</dbReference>
<dbReference type="PANTHER" id="PTHR13572">
    <property type="entry name" value="ENDO-ALPHA-1,2-MANNOSIDASE"/>
    <property type="match status" value="1"/>
</dbReference>
<dbReference type="PANTHER" id="PTHR13572:SF1">
    <property type="entry name" value="GLYCOPROTEIN ENDO-ALPHA-1,2-MANNOSIDASE"/>
    <property type="match status" value="1"/>
</dbReference>
<dbReference type="Pfam" id="PF16317">
    <property type="entry name" value="Glyco_hydro_99"/>
    <property type="match status" value="1"/>
</dbReference>
<protein>
    <recommendedName>
        <fullName>Glycoprotein endo-alpha-1,2-mannosidase</fullName>
        <ecNumber evidence="2">3.2.1.130</ecNumber>
    </recommendedName>
</protein>
<name>MANEA_XENLA</name>
<feature type="chain" id="PRO_0000282319" description="Glycoprotein endo-alpha-1,2-mannosidase">
    <location>
        <begin position="1"/>
        <end position="449"/>
    </location>
</feature>
<feature type="topological domain" description="Cytoplasmic" evidence="3">
    <location>
        <begin position="1"/>
        <end position="8"/>
    </location>
</feature>
<feature type="transmembrane region" description="Helical; Signal-anchor for type II membrane protein" evidence="3">
    <location>
        <begin position="9"/>
        <end position="29"/>
    </location>
</feature>
<feature type="topological domain" description="Lumenal" evidence="3">
    <location>
        <begin position="30"/>
        <end position="449"/>
    </location>
</feature>
<feature type="region of interest" description="Catalytic" evidence="1">
    <location>
        <begin position="59"/>
        <end position="449"/>
    </location>
</feature>
<keyword id="KW-0333">Golgi apparatus</keyword>
<keyword id="KW-0378">Hydrolase</keyword>
<keyword id="KW-0472">Membrane</keyword>
<keyword id="KW-1185">Reference proteome</keyword>
<keyword id="KW-0735">Signal-anchor</keyword>
<keyword id="KW-0812">Transmembrane</keyword>
<keyword id="KW-1133">Transmembrane helix</keyword>
<proteinExistence type="evidence at transcript level"/>
<sequence>MIRFRRRTCITLSIFIFLVCLIMAGLKHLRPENAAFGSPFGLGLFPGFHRASVLEKIPDSENHLKGNTVTETNTLPAPKDKVYQLDMEEFPPPNYDLHIFYYTWYGNPQFDGKYIHWNHPLLKHWDAKIANSFPLGKHNPPDDVGANFYPELGPYSSRDPSVIDAHMKQIRSSSVGVISVSWYPPGISDDNGEPTDDFIPSILDKAHSYGLKVNFHIEPYRNRDDYSLRNNVVYIIDKYGSHPAFYKYKTDNGRTLPMFYIYDSYITTPGTWANLLTSSGSQSIRNTPYDGIFMALLVEEKHKHDILRGGFDGFYTYFATNGFSYGSSHQHWSSLKEFCNTNNLLFIPSVGPGYIDTSIRPWNFQNTRNRINGKYYETAINAALLVRPKIISITSFNEWHEGTQIEAAIPKKTAQMKYEDYLPHKPNIYLELTRKWSEKYMKEKEHWLV</sequence>
<accession>Q6DE40</accession>
<evidence type="ECO:0000250" key="1"/>
<evidence type="ECO:0000250" key="2">
    <source>
        <dbReference type="UniProtKB" id="Q5SRI9"/>
    </source>
</evidence>
<evidence type="ECO:0000255" key="3"/>
<evidence type="ECO:0000305" key="4"/>
<organism>
    <name type="scientific">Xenopus laevis</name>
    <name type="common">African clawed frog</name>
    <dbReference type="NCBI Taxonomy" id="8355"/>
    <lineage>
        <taxon>Eukaryota</taxon>
        <taxon>Metazoa</taxon>
        <taxon>Chordata</taxon>
        <taxon>Craniata</taxon>
        <taxon>Vertebrata</taxon>
        <taxon>Euteleostomi</taxon>
        <taxon>Amphibia</taxon>
        <taxon>Batrachia</taxon>
        <taxon>Anura</taxon>
        <taxon>Pipoidea</taxon>
        <taxon>Pipidae</taxon>
        <taxon>Xenopodinae</taxon>
        <taxon>Xenopus</taxon>
        <taxon>Xenopus</taxon>
    </lineage>
</organism>
<comment type="catalytic activity">
    <reaction evidence="2">
        <text>N-{alpha-Glc-(1-&gt;3)-alpha-Man-(1-&gt;2)-alpha-Man-(1-&gt;2)-alpha-Man-(1-&gt;3)-[alpha-Man-(1-&gt;2)-alpha-Man-(1-&gt;3)-[alpha-Man-(1-&gt;2)-alpha-Man-(1-&gt;6)]-alpha-Man-(1-&gt;6)]-beta-Man-(1-&gt;4)-beta-GlcNAc-(1-&gt;4)-beta-GlcNAc}-L-asparaginyl-[protein] + H2O = alpha-D-glucosyl-(1-&gt;3)-D-mannopyranose + N(4)-{alpha-D-Man-(1-&gt;2)-alpha-D-Man-(1-&gt;3)-[alpha-D-Man-(1-&gt;2)-alpha-D-Man-(1-&gt;3)-[alpha-D-Man-(1-&gt;2)-alpha-D-Man-(1-&gt;6)]-alpha-D-Man-(1-&gt;6)]-beta-D-Man-(1-&gt;4)-beta-D-GlaNAc-(1-&gt;4)-beta-D-GlcNAc}-L-asparaginyl-[protein] (N-glucan mannose isomer 8A1,2,3B1,2)</text>
        <dbReference type="Rhea" id="RHEA:54824"/>
        <dbReference type="Rhea" id="RHEA-COMP:14010"/>
        <dbReference type="Rhea" id="RHEA-COMP:14011"/>
        <dbReference type="ChEBI" id="CHEBI:15377"/>
        <dbReference type="ChEBI" id="CHEBI:52996"/>
        <dbReference type="ChEBI" id="CHEBI:59080"/>
        <dbReference type="ChEBI" id="CHEBI:60627"/>
        <dbReference type="EC" id="3.2.1.130"/>
    </reaction>
</comment>
<comment type="subcellular location">
    <subcellularLocation>
        <location evidence="2">Golgi apparatus membrane</location>
        <topology evidence="2">Single-pass type II membrane protein</topology>
    </subcellularLocation>
</comment>
<comment type="similarity">
    <text evidence="4">Belongs to the glycosyl hydrolase 99 family.</text>
</comment>
<gene>
    <name type="primary">manea</name>
</gene>